<sequence length="126" mass="13990">KRQQPGLWGRSADPQQAGLWGKRQQPGLWGRSADPQQAGLWGKRQNPGLWGRSADPQQAGLWGKRQHPGLWGRSADPQQAGLWGRSAGSGKRQERIGIWGRSAEPPQYKELEDLKQKSAIPKAKPQ</sequence>
<dbReference type="EMBL" id="X89736">
    <property type="protein sequence ID" value="CAA61888.1"/>
    <property type="molecule type" value="mRNA"/>
</dbReference>
<dbReference type="GO" id="GO:0005576">
    <property type="term" value="C:extracellular region"/>
    <property type="evidence" value="ECO:0007669"/>
    <property type="project" value="UniProtKB-SubCell"/>
</dbReference>
<dbReference type="GO" id="GO:0007218">
    <property type="term" value="P:neuropeptide signaling pathway"/>
    <property type="evidence" value="ECO:0007669"/>
    <property type="project" value="UniProtKB-KW"/>
</dbReference>
<organism>
    <name type="scientific">Anemonia sulcata</name>
    <name type="common">Mediterranean snakelocks sea anemone</name>
    <dbReference type="NCBI Taxonomy" id="6108"/>
    <lineage>
        <taxon>Eukaryota</taxon>
        <taxon>Metazoa</taxon>
        <taxon>Cnidaria</taxon>
        <taxon>Anthozoa</taxon>
        <taxon>Hexacorallia</taxon>
        <taxon>Actiniaria</taxon>
        <taxon>Actiniidae</taxon>
        <taxon>Anemonia</taxon>
    </lineage>
</organism>
<feature type="propeptide" id="PRO_0000010029" description="1" evidence="2">
    <location>
        <begin position="1"/>
        <end position="2"/>
    </location>
</feature>
<feature type="peptide" id="PRO_0000010030" description="Metamorphosin A">
    <location>
        <begin position="3"/>
        <end position="8"/>
    </location>
</feature>
<feature type="propeptide" id="PRO_0000010031" description="2" evidence="2">
    <location>
        <begin position="11"/>
        <end position="15"/>
    </location>
</feature>
<feature type="peptide" id="PRO_0000010032" description="LWamide I" evidence="2">
    <location>
        <begin position="16"/>
        <end position="20"/>
    </location>
</feature>
<feature type="peptide" id="PRO_0000010033" description="Metamorphosin A">
    <location>
        <begin position="24"/>
        <end position="29"/>
    </location>
</feature>
<feature type="propeptide" id="PRO_0000010034" description="2" evidence="2">
    <location>
        <begin position="32"/>
        <end position="36"/>
    </location>
</feature>
<feature type="peptide" id="PRO_0000010035" description="LWamide I" evidence="2">
    <location>
        <begin position="37"/>
        <end position="41"/>
    </location>
</feature>
<feature type="peptide" id="PRO_0000010036" description="LWamide II a" evidence="2">
    <location>
        <begin position="45"/>
        <end position="50"/>
    </location>
</feature>
<feature type="propeptide" id="PRO_0000010037" description="2" evidence="2">
    <location>
        <begin position="53"/>
        <end position="57"/>
    </location>
</feature>
<feature type="peptide" id="PRO_0000010038" description="LWamide I" evidence="2">
    <location>
        <begin position="58"/>
        <end position="62"/>
    </location>
</feature>
<feature type="peptide" id="PRO_0000010039" description="LWamide II b" evidence="2">
    <location>
        <begin position="66"/>
        <end position="71"/>
    </location>
</feature>
<feature type="propeptide" id="PRO_0000010040" description="2" evidence="2">
    <location>
        <begin position="74"/>
        <end position="78"/>
    </location>
</feature>
<feature type="peptide" id="PRO_0000010041" description="LWamide I" evidence="2">
    <location>
        <begin position="79"/>
        <end position="83"/>
    </location>
</feature>
<feature type="propeptide" id="PRO_0000010042" description="3" evidence="2">
    <location>
        <begin position="86"/>
        <end position="93"/>
    </location>
</feature>
<feature type="peptide" id="PRO_0000010043" description="IWamide" evidence="2">
    <location>
        <begin position="94"/>
        <end position="99"/>
    </location>
</feature>
<feature type="propeptide" id="PRO_0000010044" description="4" evidence="2">
    <location>
        <begin position="102"/>
        <end position="126"/>
    </location>
</feature>
<feature type="region of interest" description="Disordered" evidence="3">
    <location>
        <begin position="1"/>
        <end position="126"/>
    </location>
</feature>
<feature type="compositionally biased region" description="Basic and acidic residues" evidence="3">
    <location>
        <begin position="107"/>
        <end position="116"/>
    </location>
</feature>
<feature type="modified residue" description="Tryptophan amide" evidence="2">
    <location>
        <position position="8"/>
    </location>
</feature>
<feature type="modified residue" description="Tryptophan amide" evidence="2">
    <location>
        <position position="20"/>
    </location>
</feature>
<feature type="modified residue" description="Tryptophan amide" evidence="2">
    <location>
        <position position="29"/>
    </location>
</feature>
<feature type="modified residue" description="Tryptophan amide" evidence="2">
    <location>
        <position position="41"/>
    </location>
</feature>
<feature type="modified residue" description="Tryptophan amide" evidence="2">
    <location>
        <position position="50"/>
    </location>
</feature>
<feature type="modified residue" description="Tryptophan amide" evidence="2">
    <location>
        <position position="62"/>
    </location>
</feature>
<feature type="modified residue" description="Tryptophan amide" evidence="2">
    <location>
        <position position="71"/>
    </location>
</feature>
<feature type="modified residue" description="Tryptophan amide" evidence="2">
    <location>
        <position position="83"/>
    </location>
</feature>
<feature type="modified residue" description="Tryptophan amide" evidence="2">
    <location>
        <position position="99"/>
    </location>
</feature>
<feature type="sequence variant">
    <original>H</original>
    <variation>Q</variation>
    <location>
        <position position="67"/>
    </location>
</feature>
<feature type="non-terminal residue">
    <location>
        <position position="1"/>
    </location>
</feature>
<reference evidence="4" key="1">
    <citation type="journal article" date="1996" name="Roux's Arch. Dev. Biol.">
        <title>LWamides from Cnidaria constitute a novel family of neuropeptides with morphogenetic activity.</title>
        <authorList>
            <person name="Gajewski M."/>
            <person name="Leitz T."/>
            <person name="Schlossherr J."/>
            <person name="Plickert G."/>
        </authorList>
    </citation>
    <scope>NUCLEOTIDE SEQUENCE [MRNA]</scope>
</reference>
<name>LWA_ANESU</name>
<keyword id="KW-0027">Amidation</keyword>
<keyword id="KW-0165">Cleavage on pair of basic residues</keyword>
<keyword id="KW-0527">Neuropeptide</keyword>
<keyword id="KW-0677">Repeat</keyword>
<keyword id="KW-0964">Secreted</keyword>
<comment type="function">
    <text evidence="1">Metamorphosin A may be part of an internal signaling system involved in control of metamorphosis.</text>
</comment>
<comment type="subcellular location">
    <subcellularLocation>
        <location>Secreted</location>
    </subcellularLocation>
</comment>
<comment type="similarity">
    <text evidence="4">Belongs to the LWamide neuropeptide family.</text>
</comment>
<comment type="caution">
    <text evidence="4">Opinions are divided on whether Anemonia viridis (Forsskal, 1775) and Anemonia sulcata (Pennant, 1777) are separate species.</text>
</comment>
<evidence type="ECO:0000250" key="1"/>
<evidence type="ECO:0000255" key="2"/>
<evidence type="ECO:0000256" key="3">
    <source>
        <dbReference type="SAM" id="MobiDB-lite"/>
    </source>
</evidence>
<evidence type="ECO:0000305" key="4"/>
<protein>
    <recommendedName>
        <fullName>LWamide neuropeptides</fullName>
    </recommendedName>
    <component>
        <recommendedName>
            <fullName>LWamide I</fullName>
        </recommendedName>
    </component>
    <component>
        <recommendedName>
            <fullName>LWamide II a</fullName>
        </recommendedName>
    </component>
    <component>
        <recommendedName>
            <fullName>LWamide II b</fullName>
        </recommendedName>
    </component>
    <component>
        <recommendedName>
            <fullName>Metamorphosin A</fullName>
            <shortName>MMA</shortName>
        </recommendedName>
    </component>
    <component>
        <recommendedName>
            <fullName>IWamide</fullName>
        </recommendedName>
    </component>
</protein>
<accession>Q17093</accession>
<proteinExistence type="evidence at transcript level"/>